<feature type="chain" id="PRO_0000090606" description="Electrogenic aspartate/glutamate antiporter Aralar, mitochondrial">
    <location>
        <begin position="1"/>
        <end position="695"/>
    </location>
</feature>
<feature type="topological domain" description="Mitochondrial intermembrane" evidence="1">
    <location>
        <begin position="2"/>
        <end position="345"/>
    </location>
</feature>
<feature type="transmembrane region" description="Helical; Name=1" evidence="1">
    <location>
        <begin position="346"/>
        <end position="363"/>
    </location>
</feature>
<feature type="topological domain" description="Mitochondrial matrix" evidence="1">
    <location>
        <begin position="364"/>
        <end position="405"/>
    </location>
</feature>
<feature type="transmembrane region" description="Helical; Name=2" evidence="1">
    <location>
        <begin position="406"/>
        <end position="425"/>
    </location>
</feature>
<feature type="topological domain" description="Mitochondrial intermembrane" evidence="1">
    <location>
        <begin position="426"/>
        <end position="448"/>
    </location>
</feature>
<feature type="transmembrane region" description="Helical; Name=3" evidence="1">
    <location>
        <begin position="449"/>
        <end position="462"/>
    </location>
</feature>
<feature type="topological domain" description="Mitochondrial matrix" evidence="1">
    <location>
        <begin position="463"/>
        <end position="497"/>
    </location>
</feature>
<feature type="transmembrane region" description="Helical; Name=4" evidence="1">
    <location>
        <begin position="498"/>
        <end position="517"/>
    </location>
</feature>
<feature type="topological domain" description="Mitochondrial intermembrane" evidence="1">
    <location>
        <begin position="518"/>
        <end position="536"/>
    </location>
</feature>
<feature type="transmembrane region" description="Helical; Name=5" evidence="1">
    <location>
        <begin position="537"/>
        <end position="554"/>
    </location>
</feature>
<feature type="topological domain" description="Mitochondrial matrix" evidence="1">
    <location>
        <begin position="555"/>
        <end position="593"/>
    </location>
</feature>
<feature type="transmembrane region" description="Helical; Name=6" evidence="1">
    <location>
        <begin position="594"/>
        <end position="613"/>
    </location>
</feature>
<feature type="topological domain" description="Mitochondrial intermembrane" evidence="1">
    <location>
        <begin position="614"/>
        <end position="695"/>
    </location>
</feature>
<feature type="domain" description="EF-hand 1" evidence="3">
    <location>
        <begin position="71"/>
        <end position="104"/>
    </location>
</feature>
<feature type="domain" description="EF-hand 2" evidence="3">
    <location>
        <begin position="105"/>
        <end position="140"/>
    </location>
</feature>
<feature type="domain" description="EF-hand 3" evidence="11">
    <location>
        <begin position="142"/>
        <end position="175"/>
    </location>
</feature>
<feature type="domain" description="EF-hand 4" evidence="3">
    <location>
        <begin position="176"/>
        <end position="211"/>
    </location>
</feature>
<feature type="repeat" description="Solcar 1" evidence="2">
    <location>
        <begin position="340"/>
        <end position="431"/>
    </location>
</feature>
<feature type="repeat" description="Solcar 2" evidence="2">
    <location>
        <begin position="439"/>
        <end position="523"/>
    </location>
</feature>
<feature type="repeat" description="Solcar 3" evidence="2">
    <location>
        <begin position="531"/>
        <end position="619"/>
    </location>
</feature>
<feature type="region of interest" description="N-terminal domain" evidence="1">
    <location>
        <begin position="1"/>
        <end position="310"/>
    </location>
</feature>
<feature type="region of interest" description="Linker loop domain" evidence="1">
    <location>
        <begin position="311"/>
        <end position="327"/>
    </location>
</feature>
<feature type="region of interest" description="Carrier domain" evidence="1">
    <location>
        <begin position="336"/>
        <end position="627"/>
    </location>
</feature>
<feature type="region of interest" description="C-terminal domain" evidence="1">
    <location>
        <begin position="628"/>
        <end position="695"/>
    </location>
</feature>
<feature type="binding site" evidence="3">
    <location>
        <position position="84"/>
    </location>
    <ligand>
        <name>Ca(2+)</name>
        <dbReference type="ChEBI" id="CHEBI:29108"/>
        <label>1</label>
    </ligand>
</feature>
<feature type="binding site" evidence="3">
    <location>
        <position position="86"/>
    </location>
    <ligand>
        <name>Ca(2+)</name>
        <dbReference type="ChEBI" id="CHEBI:29108"/>
        <label>1</label>
    </ligand>
</feature>
<feature type="binding site" evidence="3">
    <location>
        <position position="88"/>
    </location>
    <ligand>
        <name>Ca(2+)</name>
        <dbReference type="ChEBI" id="CHEBI:29108"/>
        <label>1</label>
    </ligand>
</feature>
<feature type="binding site" evidence="3">
    <location>
        <position position="90"/>
    </location>
    <ligand>
        <name>Ca(2+)</name>
        <dbReference type="ChEBI" id="CHEBI:29108"/>
        <label>1</label>
    </ligand>
</feature>
<feature type="binding site" evidence="3">
    <location>
        <position position="95"/>
    </location>
    <ligand>
        <name>Ca(2+)</name>
        <dbReference type="ChEBI" id="CHEBI:29108"/>
        <label>1</label>
    </ligand>
</feature>
<feature type="binding site" evidence="11">
    <location>
        <position position="118"/>
    </location>
    <ligand>
        <name>Ca(2+)</name>
        <dbReference type="ChEBI" id="CHEBI:29108"/>
        <label>2</label>
    </ligand>
</feature>
<feature type="binding site" evidence="11">
    <location>
        <position position="122"/>
    </location>
    <ligand>
        <name>Ca(2+)</name>
        <dbReference type="ChEBI" id="CHEBI:29108"/>
        <label>2</label>
    </ligand>
</feature>
<feature type="binding site" evidence="11">
    <location>
        <position position="124"/>
    </location>
    <ligand>
        <name>Ca(2+)</name>
        <dbReference type="ChEBI" id="CHEBI:29108"/>
        <label>2</label>
    </ligand>
</feature>
<feature type="binding site" evidence="11">
    <location>
        <position position="129"/>
    </location>
    <ligand>
        <name>Ca(2+)</name>
        <dbReference type="ChEBI" id="CHEBI:29108"/>
        <label>2</label>
    </ligand>
</feature>
<feature type="binding site" evidence="11">
    <location>
        <position position="189"/>
    </location>
    <ligand>
        <name>Ca(2+)</name>
        <dbReference type="ChEBI" id="CHEBI:29108"/>
        <label>3</label>
    </ligand>
</feature>
<feature type="binding site" evidence="11">
    <location>
        <position position="193"/>
    </location>
    <ligand>
        <name>Ca(2+)</name>
        <dbReference type="ChEBI" id="CHEBI:29108"/>
        <label>3</label>
    </ligand>
</feature>
<feature type="binding site" evidence="11">
    <location>
        <position position="200"/>
    </location>
    <ligand>
        <name>Ca(2+)</name>
        <dbReference type="ChEBI" id="CHEBI:29108"/>
        <label>3</label>
    </ligand>
</feature>
<feature type="splice variant" id="VSP_003266" description="In isoform A." evidence="7 8">
    <original>MPMHIPFPFNWIPTLPVARCQE</original>
    <variation>MPLTKSLPN</variation>
    <location>
        <begin position="1"/>
        <end position="22"/>
    </location>
</feature>
<feature type="splice variant" id="VSP_003265" description="In isoform B." evidence="11">
    <original>MPMHIPFPFNWIPTLPVARCQ</original>
    <variation>MHDKD</variation>
    <location>
        <begin position="1"/>
        <end position="21"/>
    </location>
</feature>
<feature type="splice variant" id="VSP_062478" description="In isoform E.">
    <original>G</original>
    <variation>GWWKRRRKIPPSS</variation>
    <location>
        <position position="298"/>
    </location>
</feature>
<feature type="sequence conflict" description="In Ref. 1; CAB62169." evidence="11" ref="1">
    <original>GA</original>
    <variation>AP</variation>
    <location>
        <begin position="356"/>
        <end position="357"/>
    </location>
</feature>
<feature type="sequence conflict" description="In Ref. 1; CAB62169." evidence="11" ref="1">
    <original>V</original>
    <variation>A</variation>
    <location>
        <position position="556"/>
    </location>
</feature>
<feature type="sequence conflict" description="In Ref. 1; CAB62169." evidence="11" ref="1">
    <original>V</original>
    <variation>L</variation>
    <location>
        <position position="653"/>
    </location>
</feature>
<feature type="mutagenesis site" description="Reduces the rate of the glutamate exchange reaction to the same rate as isoform A." evidence="5">
    <location sequence="Q9VA73-4">
        <begin position="299"/>
        <end position="310"/>
    </location>
</feature>
<feature type="mutagenesis site" description="Reduces the rate of the glutamate exchange reaction." evidence="5">
    <location sequence="Q9VA73-4">
        <begin position="301"/>
        <end position="308"/>
    </location>
</feature>
<feature type="mutagenesis site" description="Doubles the rate of the glutamate exchange reaction." evidence="5">
    <original>KRRRK</original>
    <variation>AAAAA</variation>
    <location sequence="Q9VA73-4">
        <begin position="301"/>
        <end position="305"/>
    </location>
</feature>
<feature type="mutagenesis site" description="Slightly reduces the rate of the glutamate exchange reaction." evidence="5">
    <location sequence="Q9VA73-4">
        <begin position="301"/>
        <end position="305"/>
    </location>
</feature>
<protein>
    <recommendedName>
        <fullName evidence="1">Electrogenic aspartate/glutamate antiporter Aralar, mitochondrial</fullName>
    </recommendedName>
    <alternativeName>
        <fullName evidence="12">Mitochondrial aspartate/glutamate carrier protein Aralar</fullName>
    </alternativeName>
</protein>
<reference key="1">
    <citation type="journal article" date="2000" name="Biochem. J.">
        <title>Characterization of a second member of the subfamily of calcium-binding mitochondrial carriers expressed in human non-excitable tissues.</title>
        <authorList>
            <person name="Del Arco A."/>
            <person name="Agudo M."/>
            <person name="Satrustegui J."/>
        </authorList>
    </citation>
    <scope>NUCLEOTIDE SEQUENCE [MRNA] (ISOFORM A)</scope>
    <source>
        <tissue>Ovary</tissue>
    </source>
</reference>
<reference key="2">
    <citation type="journal article" date="2000" name="Science">
        <title>The genome sequence of Drosophila melanogaster.</title>
        <authorList>
            <person name="Adams M.D."/>
            <person name="Celniker S.E."/>
            <person name="Holt R.A."/>
            <person name="Evans C.A."/>
            <person name="Gocayne J.D."/>
            <person name="Amanatides P.G."/>
            <person name="Scherer S.E."/>
            <person name="Li P.W."/>
            <person name="Hoskins R.A."/>
            <person name="Galle R.F."/>
            <person name="George R.A."/>
            <person name="Lewis S.E."/>
            <person name="Richards S."/>
            <person name="Ashburner M."/>
            <person name="Henderson S.N."/>
            <person name="Sutton G.G."/>
            <person name="Wortman J.R."/>
            <person name="Yandell M.D."/>
            <person name="Zhang Q."/>
            <person name="Chen L.X."/>
            <person name="Brandon R.C."/>
            <person name="Rogers Y.-H.C."/>
            <person name="Blazej R.G."/>
            <person name="Champe M."/>
            <person name="Pfeiffer B.D."/>
            <person name="Wan K.H."/>
            <person name="Doyle C."/>
            <person name="Baxter E.G."/>
            <person name="Helt G."/>
            <person name="Nelson C.R."/>
            <person name="Miklos G.L.G."/>
            <person name="Abril J.F."/>
            <person name="Agbayani A."/>
            <person name="An H.-J."/>
            <person name="Andrews-Pfannkoch C."/>
            <person name="Baldwin D."/>
            <person name="Ballew R.M."/>
            <person name="Basu A."/>
            <person name="Baxendale J."/>
            <person name="Bayraktaroglu L."/>
            <person name="Beasley E.M."/>
            <person name="Beeson K.Y."/>
            <person name="Benos P.V."/>
            <person name="Berman B.P."/>
            <person name="Bhandari D."/>
            <person name="Bolshakov S."/>
            <person name="Borkova D."/>
            <person name="Botchan M.R."/>
            <person name="Bouck J."/>
            <person name="Brokstein P."/>
            <person name="Brottier P."/>
            <person name="Burtis K.C."/>
            <person name="Busam D.A."/>
            <person name="Butler H."/>
            <person name="Cadieu E."/>
            <person name="Center A."/>
            <person name="Chandra I."/>
            <person name="Cherry J.M."/>
            <person name="Cawley S."/>
            <person name="Dahlke C."/>
            <person name="Davenport L.B."/>
            <person name="Davies P."/>
            <person name="de Pablos B."/>
            <person name="Delcher A."/>
            <person name="Deng Z."/>
            <person name="Mays A.D."/>
            <person name="Dew I."/>
            <person name="Dietz S.M."/>
            <person name="Dodson K."/>
            <person name="Doup L.E."/>
            <person name="Downes M."/>
            <person name="Dugan-Rocha S."/>
            <person name="Dunkov B.C."/>
            <person name="Dunn P."/>
            <person name="Durbin K.J."/>
            <person name="Evangelista C.C."/>
            <person name="Ferraz C."/>
            <person name="Ferriera S."/>
            <person name="Fleischmann W."/>
            <person name="Fosler C."/>
            <person name="Gabrielian A.E."/>
            <person name="Garg N.S."/>
            <person name="Gelbart W.M."/>
            <person name="Glasser K."/>
            <person name="Glodek A."/>
            <person name="Gong F."/>
            <person name="Gorrell J.H."/>
            <person name="Gu Z."/>
            <person name="Guan P."/>
            <person name="Harris M."/>
            <person name="Harris N.L."/>
            <person name="Harvey D.A."/>
            <person name="Heiman T.J."/>
            <person name="Hernandez J.R."/>
            <person name="Houck J."/>
            <person name="Hostin D."/>
            <person name="Houston K.A."/>
            <person name="Howland T.J."/>
            <person name="Wei M.-H."/>
            <person name="Ibegwam C."/>
            <person name="Jalali M."/>
            <person name="Kalush F."/>
            <person name="Karpen G.H."/>
            <person name="Ke Z."/>
            <person name="Kennison J.A."/>
            <person name="Ketchum K.A."/>
            <person name="Kimmel B.E."/>
            <person name="Kodira C.D."/>
            <person name="Kraft C.L."/>
            <person name="Kravitz S."/>
            <person name="Kulp D."/>
            <person name="Lai Z."/>
            <person name="Lasko P."/>
            <person name="Lei Y."/>
            <person name="Levitsky A.A."/>
            <person name="Li J.H."/>
            <person name="Li Z."/>
            <person name="Liang Y."/>
            <person name="Lin X."/>
            <person name="Liu X."/>
            <person name="Mattei B."/>
            <person name="McIntosh T.C."/>
            <person name="McLeod M.P."/>
            <person name="McPherson D."/>
            <person name="Merkulov G."/>
            <person name="Milshina N.V."/>
            <person name="Mobarry C."/>
            <person name="Morris J."/>
            <person name="Moshrefi A."/>
            <person name="Mount S.M."/>
            <person name="Moy M."/>
            <person name="Murphy B."/>
            <person name="Murphy L."/>
            <person name="Muzny D.M."/>
            <person name="Nelson D.L."/>
            <person name="Nelson D.R."/>
            <person name="Nelson K.A."/>
            <person name="Nixon K."/>
            <person name="Nusskern D.R."/>
            <person name="Pacleb J.M."/>
            <person name="Palazzolo M."/>
            <person name="Pittman G.S."/>
            <person name="Pan S."/>
            <person name="Pollard J."/>
            <person name="Puri V."/>
            <person name="Reese M.G."/>
            <person name="Reinert K."/>
            <person name="Remington K."/>
            <person name="Saunders R.D.C."/>
            <person name="Scheeler F."/>
            <person name="Shen H."/>
            <person name="Shue B.C."/>
            <person name="Siden-Kiamos I."/>
            <person name="Simpson M."/>
            <person name="Skupski M.P."/>
            <person name="Smith T.J."/>
            <person name="Spier E."/>
            <person name="Spradling A.C."/>
            <person name="Stapleton M."/>
            <person name="Strong R."/>
            <person name="Sun E."/>
            <person name="Svirskas R."/>
            <person name="Tector C."/>
            <person name="Turner R."/>
            <person name="Venter E."/>
            <person name="Wang A.H."/>
            <person name="Wang X."/>
            <person name="Wang Z.-Y."/>
            <person name="Wassarman D.A."/>
            <person name="Weinstock G.M."/>
            <person name="Weissenbach J."/>
            <person name="Williams S.M."/>
            <person name="Woodage T."/>
            <person name="Worley K.C."/>
            <person name="Wu D."/>
            <person name="Yang S."/>
            <person name="Yao Q.A."/>
            <person name="Ye J."/>
            <person name="Yeh R.-F."/>
            <person name="Zaveri J.S."/>
            <person name="Zhan M."/>
            <person name="Zhang G."/>
            <person name="Zhao Q."/>
            <person name="Zheng L."/>
            <person name="Zheng X.H."/>
            <person name="Zhong F.N."/>
            <person name="Zhong W."/>
            <person name="Zhou X."/>
            <person name="Zhu S.C."/>
            <person name="Zhu X."/>
            <person name="Smith H.O."/>
            <person name="Gibbs R.A."/>
            <person name="Myers E.W."/>
            <person name="Rubin G.M."/>
            <person name="Venter J.C."/>
        </authorList>
    </citation>
    <scope>NUCLEOTIDE SEQUENCE [LARGE SCALE GENOMIC DNA]</scope>
    <source>
        <strain>Berkeley</strain>
    </source>
</reference>
<reference key="3">
    <citation type="journal article" date="2002" name="Genome Biol.">
        <title>Annotation of the Drosophila melanogaster euchromatic genome: a systematic review.</title>
        <authorList>
            <person name="Misra S."/>
            <person name="Crosby M.A."/>
            <person name="Mungall C.J."/>
            <person name="Matthews B.B."/>
            <person name="Campbell K.S."/>
            <person name="Hradecky P."/>
            <person name="Huang Y."/>
            <person name="Kaminker J.S."/>
            <person name="Millburn G.H."/>
            <person name="Prochnik S.E."/>
            <person name="Smith C.D."/>
            <person name="Tupy J.L."/>
            <person name="Whitfield E.J."/>
            <person name="Bayraktaroglu L."/>
            <person name="Berman B.P."/>
            <person name="Bettencourt B.R."/>
            <person name="Celniker S.E."/>
            <person name="de Grey A.D.N.J."/>
            <person name="Drysdale R.A."/>
            <person name="Harris N.L."/>
            <person name="Richter J."/>
            <person name="Russo S."/>
            <person name="Schroeder A.J."/>
            <person name="Shu S.Q."/>
            <person name="Stapleton M."/>
            <person name="Yamada C."/>
            <person name="Ashburner M."/>
            <person name="Gelbart W.M."/>
            <person name="Rubin G.M."/>
            <person name="Lewis S.E."/>
        </authorList>
    </citation>
    <scope>GENOME REANNOTATION</scope>
    <scope>ALTERNATIVE SPLICING</scope>
    <source>
        <strain>Berkeley</strain>
    </source>
</reference>
<reference key="4">
    <citation type="journal article" date="2002" name="Genome Biol.">
        <title>A Drosophila full-length cDNA resource.</title>
        <authorList>
            <person name="Stapleton M."/>
            <person name="Carlson J.W."/>
            <person name="Brokstein P."/>
            <person name="Yu C."/>
            <person name="Champe M."/>
            <person name="George R.A."/>
            <person name="Guarin H."/>
            <person name="Kronmiller B."/>
            <person name="Pacleb J.M."/>
            <person name="Park S."/>
            <person name="Wan K.H."/>
            <person name="Rubin G.M."/>
            <person name="Celniker S.E."/>
        </authorList>
    </citation>
    <scope>NUCLEOTIDE SEQUENCE [LARGE SCALE MRNA] (ISOFORM A)</scope>
    <source>
        <strain>Berkeley</strain>
        <tissue>Embryo</tissue>
    </source>
</reference>
<reference key="5">
    <citation type="journal article" date="2020" name="Cell">
        <title>Aralar Sequesters GABA into Hyperactive Mitochondria, Causing Social Behavior Deficits.</title>
        <authorList>
            <person name="Kanellopoulos A.K."/>
            <person name="Mariano V."/>
            <person name="Spinazzi M."/>
            <person name="Woo Y.J."/>
            <person name="McLean C."/>
            <person name="Pech U."/>
            <person name="Li K.W."/>
            <person name="Armstrong J.D."/>
            <person name="Giangrande A."/>
            <person name="Callaerts P."/>
            <person name="Smit A.B."/>
            <person name="Abrahams B.S."/>
            <person name="Fiala A."/>
            <person name="Achsel T."/>
            <person name="Bagni C."/>
        </authorList>
    </citation>
    <scope>FUNCTION</scope>
</reference>
<reference key="6">
    <citation type="journal article" date="2021" name="Biochim. Biophys. Acta">
        <title>The mitochondrial aspartate/glutamate carrier (AGC or Aralar1) isoforms in D. melanogaster: biochemical characterization, gene structure, and evolutionary analysis.</title>
        <authorList>
            <person name="Lunetti P."/>
            <person name="Marsano R.M."/>
            <person name="Curcio R."/>
            <person name="Dolce V."/>
            <person name="Fiermonte G."/>
            <person name="Cappello A.R."/>
            <person name="Marra F."/>
            <person name="Moschetti R."/>
            <person name="Li Y."/>
            <person name="Aiello D."/>
            <person name="Del Arco Martinez A."/>
            <person name="Lauria G."/>
            <person name="De Leonardis F."/>
            <person name="Ferramosca A."/>
            <person name="Zara V."/>
            <person name="Capobianco L."/>
        </authorList>
    </citation>
    <scope>FUNCTION</scope>
    <scope>TRANSPORTER ACTIVITY</scope>
    <scope>COFACTOR</scope>
    <scope>ACTIVITY REGULATION</scope>
    <scope>ALTERNATIVE SPLICING</scope>
    <scope>TISSUE SPECIFICITY</scope>
    <scope>DEVELOPMENTAL STAGE</scope>
    <scope>MUTAGENESIS OF 299-TRP--SER-310 (ISOFORM E)</scope>
</reference>
<reference key="7">
    <citation type="journal article" date="2024" name="Biochim. Biophys. Acta">
        <title>The mitochondrial aspartate/glutamate carrier does not transport GABA.</title>
        <authorList>
            <person name="Porcelli V."/>
            <person name="Barile S."/>
            <person name="Capobianco L."/>
            <person name="Barile S.N."/>
            <person name="Gorgoglione R."/>
            <person name="Fiermonte G."/>
            <person name="Monti B."/>
            <person name="Lasorsa F.M."/>
            <person name="Palmieri L."/>
        </authorList>
    </citation>
    <scope>FUNCTION</scope>
    <scope>LACK OF GABA TRANSPORT ACTIVITY</scope>
</reference>
<sequence length="695" mass="76754">MPMHIPFPFNWIPTLPVARCQESPSLLKRAGTEKLREVFLKYASIQKNGEHYMTSEDFVRKFLGLFSESAFNDESVRLLANIADTSKDGLISFSEFQAFEGLLCTPDALYRTAFQLFDRKGNGTVSYADFADVVQKTELHSKIPFSLDGPFIKRYFGDKKQRLINYAEFTQLLHDFHEEHAMEAFRSKDPAGTGFISPLDFQDIIVNVKRHLLTPGVRDNLVSVTEGHKVSFPYFIAFTSLLNNMELIKQVYLHATEGSRTDMITKDQILLAAQTMSQITPLEIDILFHLAGAVHQAGRIDYSDLSNIAPEHYTKHMTHRLAEIKAVESPADRSAFIQVLESSYRFTLGSFAGAVGATVVYPIDLVKTRMQNQRAGSYIGEVAYRNSWDCFKKVVRHEGFMGLYRGLLPQLMGVAPEKAIKLTVNDLVRDKLTDKKGNIPTWAEVLAGGCAGASQVVFTNPLEIVKIRLQVAGEIASGSKIRAWSVVRELGLFGLYKGARACLLRDVPFSAIYFPTYAHTKAMMADKDGYNHPLTLLAAGAIAGVPAASLVTPADVIKTRLQVVARSGQTTYTGVWDATKKIMAEEGPRAFWKGTAARVFRSSPQFGVTLVTYELLQRLFYVDFGGTQPKGSEAHKITTPLEQAAASVTTENVDHIGGYRAAVPLLAGVESKFGLYLPRFGRGVTAASPSTATGS</sequence>
<dbReference type="EMBL" id="Y18197">
    <property type="protein sequence ID" value="CAB62169.1"/>
    <property type="molecule type" value="mRNA"/>
</dbReference>
<dbReference type="EMBL" id="AE014297">
    <property type="protein sequence ID" value="AAF57048.1"/>
    <property type="molecule type" value="Genomic_DNA"/>
</dbReference>
<dbReference type="EMBL" id="AE014297">
    <property type="protein sequence ID" value="AAF57049.1"/>
    <property type="molecule type" value="Genomic_DNA"/>
</dbReference>
<dbReference type="EMBL" id="AE014297">
    <property type="protein sequence ID" value="AAF57050.3"/>
    <property type="molecule type" value="Genomic_DNA"/>
</dbReference>
<dbReference type="EMBL" id="AE014297">
    <property type="protein sequence ID" value="AAN14230.1"/>
    <property type="molecule type" value="Genomic_DNA"/>
</dbReference>
<dbReference type="EMBL" id="AE014297">
    <property type="protein sequence ID" value="AFH06685.1"/>
    <property type="molecule type" value="Genomic_DNA"/>
</dbReference>
<dbReference type="EMBL" id="AY058654">
    <property type="protein sequence ID" value="AAL13883.1"/>
    <property type="molecule type" value="mRNA"/>
</dbReference>
<dbReference type="RefSeq" id="NP_001247368.1">
    <molecule id="Q9VA73-4"/>
    <property type="nucleotide sequence ID" value="NM_001260439.1"/>
</dbReference>
<dbReference type="RefSeq" id="NP_651795.2">
    <molecule id="Q9VA73-2"/>
    <property type="nucleotide sequence ID" value="NM_143538.3"/>
</dbReference>
<dbReference type="RefSeq" id="NP_733364.1">
    <molecule id="Q9VA73-1"/>
    <property type="nucleotide sequence ID" value="NM_170485.2"/>
</dbReference>
<dbReference type="RefSeq" id="NP_733365.1">
    <molecule id="Q9VA73-2"/>
    <property type="nucleotide sequence ID" value="NM_170486.2"/>
</dbReference>
<dbReference type="RefSeq" id="NP_733366.2">
    <molecule id="Q9VA73-3"/>
    <property type="nucleotide sequence ID" value="NM_170487.3"/>
</dbReference>
<dbReference type="SMR" id="Q9VA73"/>
<dbReference type="BioGRID" id="68470">
    <property type="interactions" value="6"/>
</dbReference>
<dbReference type="DIP" id="DIP-17130N"/>
<dbReference type="FunCoup" id="Q9VA73">
    <property type="interactions" value="1026"/>
</dbReference>
<dbReference type="IntAct" id="Q9VA73">
    <property type="interactions" value="5"/>
</dbReference>
<dbReference type="MINT" id="Q9VA73"/>
<dbReference type="STRING" id="7227.FBpp0297541"/>
<dbReference type="PaxDb" id="7227-FBpp0297541"/>
<dbReference type="DNASU" id="43616"/>
<dbReference type="EnsemblMetazoa" id="FBtr0085692">
    <molecule id="Q9VA73-1"/>
    <property type="protein sequence ID" value="FBpp0085054"/>
    <property type="gene ID" value="FBgn0028646"/>
</dbReference>
<dbReference type="EnsemblMetazoa" id="FBtr0085693">
    <molecule id="Q9VA73-3"/>
    <property type="protein sequence ID" value="FBpp0085055"/>
    <property type="gene ID" value="FBgn0028646"/>
</dbReference>
<dbReference type="EnsemblMetazoa" id="FBtr0085694">
    <molecule id="Q9VA73-2"/>
    <property type="protein sequence ID" value="FBpp0085056"/>
    <property type="gene ID" value="FBgn0028646"/>
</dbReference>
<dbReference type="EnsemblMetazoa" id="FBtr0085695">
    <molecule id="Q9VA73-2"/>
    <property type="protein sequence ID" value="FBpp0085057"/>
    <property type="gene ID" value="FBgn0028646"/>
</dbReference>
<dbReference type="EnsemblMetazoa" id="FBtr0306586">
    <molecule id="Q9VA73-4"/>
    <property type="protein sequence ID" value="FBpp0297541"/>
    <property type="gene ID" value="FBgn0028646"/>
</dbReference>
<dbReference type="GeneID" id="43616"/>
<dbReference type="KEGG" id="dme:Dmel_CG2139"/>
<dbReference type="UCSC" id="CG2139-RA">
    <property type="organism name" value="d. melanogaster"/>
</dbReference>
<dbReference type="AGR" id="FB:FBgn0028646"/>
<dbReference type="CTD" id="43616"/>
<dbReference type="FlyBase" id="FBgn0028646">
    <property type="gene designation" value="Aralar"/>
</dbReference>
<dbReference type="VEuPathDB" id="VectorBase:FBgn0028646"/>
<dbReference type="eggNOG" id="KOG0751">
    <property type="taxonomic scope" value="Eukaryota"/>
</dbReference>
<dbReference type="GeneTree" id="ENSGT00940000155963"/>
<dbReference type="InParanoid" id="Q9VA73"/>
<dbReference type="OMA" id="AFQNVMR"/>
<dbReference type="OrthoDB" id="2161at2759"/>
<dbReference type="PhylomeDB" id="Q9VA73"/>
<dbReference type="Reactome" id="R-DME-8963693">
    <property type="pathway name" value="Aspartate and asparagine metabolism"/>
</dbReference>
<dbReference type="Reactome" id="R-DME-9856872">
    <property type="pathway name" value="Malate-aspartate shuttle"/>
</dbReference>
<dbReference type="BioGRID-ORCS" id="43616">
    <property type="hits" value="0 hits in 3 CRISPR screens"/>
</dbReference>
<dbReference type="ChiTaRS" id="aralar1">
    <property type="organism name" value="fly"/>
</dbReference>
<dbReference type="GenomeRNAi" id="43616"/>
<dbReference type="PRO" id="PR:Q9VA73"/>
<dbReference type="Proteomes" id="UP000000803">
    <property type="component" value="Chromosome 3R"/>
</dbReference>
<dbReference type="Bgee" id="FBgn0028646">
    <property type="expression patterns" value="Expressed in fat body cell in open tracheal system trachea and 196 other cell types or tissues"/>
</dbReference>
<dbReference type="ExpressionAtlas" id="Q9VA73">
    <property type="expression patterns" value="baseline and differential"/>
</dbReference>
<dbReference type="GO" id="GO:0005743">
    <property type="term" value="C:mitochondrial inner membrane"/>
    <property type="evidence" value="ECO:0000305"/>
    <property type="project" value="FlyBase"/>
</dbReference>
<dbReference type="GO" id="GO:0005739">
    <property type="term" value="C:mitochondrion"/>
    <property type="evidence" value="ECO:0007005"/>
    <property type="project" value="FlyBase"/>
</dbReference>
<dbReference type="GO" id="GO:0000514">
    <property type="term" value="F:3-sulfino-L-alanine: proton, glutamate antiporter activity"/>
    <property type="evidence" value="ECO:0000314"/>
    <property type="project" value="UniProtKB"/>
</dbReference>
<dbReference type="GO" id="GO:0000515">
    <property type="term" value="F:aspartate:glutamate, proton antiporter activity"/>
    <property type="evidence" value="ECO:0000314"/>
    <property type="project" value="FlyBase"/>
</dbReference>
<dbReference type="GO" id="GO:0005509">
    <property type="term" value="F:calcium ion binding"/>
    <property type="evidence" value="ECO:0000250"/>
    <property type="project" value="UniProtKB"/>
</dbReference>
<dbReference type="GO" id="GO:0015495">
    <property type="term" value="F:gamma-aminobutyric acid:proton symporter activity"/>
    <property type="evidence" value="ECO:0000316"/>
    <property type="project" value="FlyBase"/>
</dbReference>
<dbReference type="GO" id="GO:0042802">
    <property type="term" value="F:identical protein binding"/>
    <property type="evidence" value="ECO:0000250"/>
    <property type="project" value="UniProtKB"/>
</dbReference>
<dbReference type="GO" id="GO:0015183">
    <property type="term" value="F:L-aspartate transmembrane transporter activity"/>
    <property type="evidence" value="ECO:0000318"/>
    <property type="project" value="GO_Central"/>
</dbReference>
<dbReference type="GO" id="GO:0005313">
    <property type="term" value="F:L-glutamate transmembrane transporter activity"/>
    <property type="evidence" value="ECO:0000318"/>
    <property type="project" value="GO_Central"/>
</dbReference>
<dbReference type="GO" id="GO:0015810">
    <property type="term" value="P:aspartate transmembrane transport"/>
    <property type="evidence" value="ECO:0000318"/>
    <property type="project" value="GO_Central"/>
</dbReference>
<dbReference type="GO" id="GO:0015812">
    <property type="term" value="P:gamma-aminobutyric acid transport"/>
    <property type="evidence" value="ECO:0000316"/>
    <property type="project" value="FlyBase"/>
</dbReference>
<dbReference type="GO" id="GO:0006094">
    <property type="term" value="P:gluconeogenesis"/>
    <property type="evidence" value="ECO:0000250"/>
    <property type="project" value="FlyBase"/>
</dbReference>
<dbReference type="GO" id="GO:0070778">
    <property type="term" value="P:L-aspartate transmembrane transport"/>
    <property type="evidence" value="ECO:0000314"/>
    <property type="project" value="FlyBase"/>
</dbReference>
<dbReference type="GO" id="GO:0015813">
    <property type="term" value="P:L-glutamate transmembrane transport"/>
    <property type="evidence" value="ECO:0000314"/>
    <property type="project" value="FlyBase"/>
</dbReference>
<dbReference type="GO" id="GO:0043490">
    <property type="term" value="P:malate-aspartate shuttle"/>
    <property type="evidence" value="ECO:0000316"/>
    <property type="project" value="FlyBase"/>
</dbReference>
<dbReference type="GO" id="GO:0042060">
    <property type="term" value="P:wound healing"/>
    <property type="evidence" value="ECO:0007001"/>
    <property type="project" value="FlyBase"/>
</dbReference>
<dbReference type="FunFam" id="1.10.238.10:FF:000416">
    <property type="entry name" value="Aralar1, isoform F"/>
    <property type="match status" value="1"/>
</dbReference>
<dbReference type="FunFam" id="1.10.238.10:FF:000396">
    <property type="entry name" value="Calcium-binding mitochondrial carrier protein Aralar1"/>
    <property type="match status" value="1"/>
</dbReference>
<dbReference type="FunFam" id="1.50.40.10:FF:000004">
    <property type="entry name" value="Calcium-binding mitochondrial carrier protein Aralar1"/>
    <property type="match status" value="1"/>
</dbReference>
<dbReference type="Gene3D" id="1.10.238.10">
    <property type="entry name" value="EF-hand"/>
    <property type="match status" value="2"/>
</dbReference>
<dbReference type="Gene3D" id="1.50.40.10">
    <property type="entry name" value="Mitochondrial carrier domain"/>
    <property type="match status" value="1"/>
</dbReference>
<dbReference type="InterPro" id="IPR011992">
    <property type="entry name" value="EF-hand-dom_pair"/>
</dbReference>
<dbReference type="InterPro" id="IPR002048">
    <property type="entry name" value="EF_hand_dom"/>
</dbReference>
<dbReference type="InterPro" id="IPR002067">
    <property type="entry name" value="Mit_carrier"/>
</dbReference>
<dbReference type="InterPro" id="IPR051028">
    <property type="entry name" value="Mito_Solute_Carrier"/>
</dbReference>
<dbReference type="InterPro" id="IPR018108">
    <property type="entry name" value="Mitochondrial_sb/sol_carrier"/>
</dbReference>
<dbReference type="InterPro" id="IPR023395">
    <property type="entry name" value="Mt_carrier_dom_sf"/>
</dbReference>
<dbReference type="PANTHER" id="PTHR45678:SF9">
    <property type="entry name" value="CALCIUM-BINDING MITOCHONDRIAL CARRIER PROTEIN ARALAR1"/>
    <property type="match status" value="1"/>
</dbReference>
<dbReference type="PANTHER" id="PTHR45678">
    <property type="entry name" value="MITOCHONDRIAL 2-OXODICARBOXYLATE CARRIER 1-RELATED"/>
    <property type="match status" value="1"/>
</dbReference>
<dbReference type="Pfam" id="PF13202">
    <property type="entry name" value="EF-hand_5"/>
    <property type="match status" value="1"/>
</dbReference>
<dbReference type="Pfam" id="PF13833">
    <property type="entry name" value="EF-hand_8"/>
    <property type="match status" value="1"/>
</dbReference>
<dbReference type="Pfam" id="PF00153">
    <property type="entry name" value="Mito_carr"/>
    <property type="match status" value="3"/>
</dbReference>
<dbReference type="PRINTS" id="PR00926">
    <property type="entry name" value="MITOCARRIER"/>
</dbReference>
<dbReference type="SMART" id="SM00054">
    <property type="entry name" value="EFh"/>
    <property type="match status" value="3"/>
</dbReference>
<dbReference type="SUPFAM" id="SSF47473">
    <property type="entry name" value="EF-hand"/>
    <property type="match status" value="2"/>
</dbReference>
<dbReference type="SUPFAM" id="SSF103506">
    <property type="entry name" value="Mitochondrial carrier"/>
    <property type="match status" value="1"/>
</dbReference>
<dbReference type="PROSITE" id="PS00018">
    <property type="entry name" value="EF_HAND_1"/>
    <property type="match status" value="1"/>
</dbReference>
<dbReference type="PROSITE" id="PS50222">
    <property type="entry name" value="EF_HAND_2"/>
    <property type="match status" value="3"/>
</dbReference>
<dbReference type="PROSITE" id="PS50920">
    <property type="entry name" value="SOLCAR"/>
    <property type="match status" value="3"/>
</dbReference>
<name>CMC_DROME</name>
<gene>
    <name evidence="12" type="primary">Aralar</name>
    <name evidence="10" type="synonym">AGC</name>
    <name evidence="9 12" type="synonym">aralar1</name>
    <name evidence="12" type="synonym">CABP1</name>
    <name evidence="12" type="ORF">CG2139</name>
</gene>
<proteinExistence type="evidence at protein level"/>
<evidence type="ECO:0000250" key="1">
    <source>
        <dbReference type="UniProtKB" id="O75746"/>
    </source>
</evidence>
<evidence type="ECO:0000255" key="2">
    <source>
        <dbReference type="PROSITE-ProRule" id="PRU00282"/>
    </source>
</evidence>
<evidence type="ECO:0000255" key="3">
    <source>
        <dbReference type="PROSITE-ProRule" id="PRU00448"/>
    </source>
</evidence>
<evidence type="ECO:0000269" key="4">
    <source>
    </source>
</evidence>
<evidence type="ECO:0000269" key="5">
    <source>
    </source>
</evidence>
<evidence type="ECO:0000269" key="6">
    <source>
    </source>
</evidence>
<evidence type="ECO:0000303" key="7">
    <source>
    </source>
</evidence>
<evidence type="ECO:0000303" key="8">
    <source>
    </source>
</evidence>
<evidence type="ECO:0000303" key="9">
    <source>
    </source>
</evidence>
<evidence type="ECO:0000303" key="10">
    <source>
    </source>
</evidence>
<evidence type="ECO:0000305" key="11"/>
<evidence type="ECO:0000312" key="12">
    <source>
        <dbReference type="FlyBase" id="FBgn0028646"/>
    </source>
</evidence>
<evidence type="ECO:0000312" key="13">
    <source>
        <dbReference type="Proteomes" id="UP000000803"/>
    </source>
</evidence>
<comment type="function">
    <text evidence="4 5 6">Mitochondrial electrogenic aspartate/glutamate antiporter that favors efflux of aspartate and entry of glutamate and proton within the mitochondria as part of the malate-aspartate shuttle (PubMed:33497735). Also mediates the exchange of L-cysteinesulfinate (3-sulfino-L-alanine) for L-glutamate (PubMed:33497735). Necessary for gamma-aminobutyric acid (GABA) uptake in brain mitochondria in response to increased mitochondrial membrane polarization; does not possess detectable GABA transport activity but role may be indirect (PubMed:32200800, PubMed:38945283).</text>
</comment>
<comment type="function">
    <molecule>Isoform A</molecule>
    <text evidence="4 5 6">Possesses transport activity towards L-aspartate, L-glutamate and L-cysteinesulfinate (3-sulfino-L-alanine) (PubMed:33497735). L-glutamine transport activity is undetectable (PubMed:32200800, PubMed:38945283). GABA transport activity is undetectable (PubMed:38945283).</text>
</comment>
<comment type="function">
    <molecule>Isoform E</molecule>
    <text evidence="5 6">Possesses transport activity towards L-aspartate, L-glutamate and L-cysteinesulfinate (3-sulfino-L-alanine) (PubMed:33497735). Has a wider substrate specificity range that includes L-2-aminoadipate and L-glutamine (PubMed:33497735). GABA transport activity is undetectable (PubMed:38945283).</text>
</comment>
<comment type="catalytic activity">
    <reaction evidence="5">
        <text>L-aspartate(in) + L-glutamate(out) + H(+)(out) = L-aspartate(out) + L-glutamate(in) + H(+)(in)</text>
        <dbReference type="Rhea" id="RHEA:70783"/>
        <dbReference type="ChEBI" id="CHEBI:15378"/>
        <dbReference type="ChEBI" id="CHEBI:29985"/>
        <dbReference type="ChEBI" id="CHEBI:29991"/>
    </reaction>
</comment>
<comment type="catalytic activity">
    <reaction evidence="5">
        <text>3-sulfino-L-alanine(out) + L-glutamate(in) + H(+)(in) = 3-sulfino-L-alanine(in) + L-glutamate(out) + H(+)(out)</text>
        <dbReference type="Rhea" id="RHEA:70967"/>
        <dbReference type="ChEBI" id="CHEBI:15378"/>
        <dbReference type="ChEBI" id="CHEBI:29985"/>
        <dbReference type="ChEBI" id="CHEBI:61085"/>
    </reaction>
</comment>
<comment type="catalytic activity">
    <reaction evidence="5">
        <text>L-2-aminoadipate(in) + L-glutamate(out) + H(+)(out) = L-2-aminoadipate(out) + L-glutamate(in) + H(+)(in)</text>
        <dbReference type="Rhea" id="RHEA:82047"/>
        <dbReference type="ChEBI" id="CHEBI:15378"/>
        <dbReference type="ChEBI" id="CHEBI:29985"/>
        <dbReference type="ChEBI" id="CHEBI:58672"/>
    </reaction>
</comment>
<comment type="catalytic activity">
    <molecule>Isoform E</molecule>
    <reaction evidence="5">
        <text>L-glutamine(in) + L-glutamate(out) + Na(+)(out) + H(+)(out) = L-glutamine(out) + L-glutamate(in) + Na(+)(in) + H(+)(in)</text>
        <dbReference type="Rhea" id="RHEA:70883"/>
        <dbReference type="ChEBI" id="CHEBI:15378"/>
        <dbReference type="ChEBI" id="CHEBI:29101"/>
        <dbReference type="ChEBI" id="CHEBI:29985"/>
        <dbReference type="ChEBI" id="CHEBI:58359"/>
    </reaction>
</comment>
<comment type="cofactor">
    <cofactor evidence="5">
        <name>Ca(2+)</name>
        <dbReference type="ChEBI" id="CHEBI:29108"/>
    </cofactor>
</comment>
<comment type="activity regulation">
    <text evidence="5">Activated by Ca(2+) (PubMed:33497735). Inhibited by p-chloromercuribenzoate, pyrocarbonate, mersalyl, tannic acid and N-ethylmaleimide (PubMed:33497735).</text>
</comment>
<comment type="biophysicochemical properties">
    <molecule>Isoform A</molecule>
    <kinetics>
        <KM evidence="5">0.26 mM for L-glutamate (at pH 6.5)</KM>
        <KM evidence="5">47 mM for L-aspartate (at pH 6.5)</KM>
        <Vmax evidence="5">32.25 nmol/min/mg protein toward L-glutamate and L-aspartate (at pH 6.5)</Vmax>
    </kinetics>
</comment>
<comment type="biophysicochemical properties">
    <molecule>Isoform E</molecule>
    <kinetics>
        <KM evidence="5">0.29 mM for L-glutamate (at pH 6.5)</KM>
        <KM evidence="5">51 mM for L-aspartate (at pH 6.5)</KM>
        <Vmax evidence="5">94.29 nmol/min/mg protein toward L-glutamate and L-aspartate (at pH 6.5)</Vmax>
    </kinetics>
</comment>
<comment type="subunit">
    <text evidence="1">Homodimer (via N-terminus).</text>
</comment>
<comment type="subcellular location">
    <subcellularLocation>
        <location evidence="1">Mitochondrion inner membrane</location>
        <topology evidence="1">Multi-pass membrane protein</topology>
    </subcellularLocation>
</comment>
<comment type="alternative products">
    <event type="alternative promoter"/>
    <event type="alternative splicing"/>
    <isoform>
        <id>Q9VA73-1</id>
        <name>C</name>
        <sequence type="displayed"/>
    </isoform>
    <isoform>
        <id>Q9VA73-2</id>
        <name>A</name>
        <name>D</name>
        <sequence type="described" ref="VSP_003266"/>
    </isoform>
    <isoform>
        <id>Q9VA73-3</id>
        <name>B</name>
        <sequence type="described" ref="VSP_003265"/>
    </isoform>
    <isoform>
        <id>Q9VA73-4</id>
        <name>E</name>
        <sequence type="described" ref="VSP_062478"/>
    </isoform>
    <text>A number of isoforms are produced.</text>
</comment>
<comment type="tissue specificity">
    <molecule>Isoform A</molecule>
    <text evidence="5">Expressed throughout the body in both males and females, including in ovaries and testes.</text>
</comment>
<comment type="tissue specificity">
    <molecule>Isoform B</molecule>
    <text evidence="5">Specifically expressed in female ovaries.</text>
</comment>
<comment type="tissue specificity">
    <molecule>Isoform C</molecule>
    <text evidence="5">Expressed throughout the body in both males and females but absent from ovaries and testes.</text>
</comment>
<comment type="tissue specificity">
    <molecule>Isoform E</molecule>
    <text evidence="5">Expressed throughout the body in both males and females but absent from ovaries and testes.</text>
</comment>
<comment type="developmental stage">
    <molecule>Isoform A</molecule>
    <text evidence="5">Expressed at all developmental stages.</text>
</comment>
<comment type="developmental stage">
    <molecule>Isoform B</molecule>
    <text evidence="5">Expressed from larval instar stage 3 onwards.</text>
</comment>
<comment type="developmental stage">
    <molecule>Isoform C</molecule>
    <text evidence="5">Expressed during late embryogenesis between stage 12 and 15 (PubMed:33497735). Expressed from pupal stage onwards (PubMed:33497735).</text>
</comment>
<comment type="developmental stage">
    <molecule>Isoform E</molecule>
    <text evidence="5">Only expressed in adults.</text>
</comment>
<comment type="domain">
    <text evidence="1">Upon calcium binding, the EF-hand-containing regulatory N-terminal domain binds to the C-terminal domain, opening a vestibule which allows the substrates to be translocated through the carrier domain. In the absence of calcium, the linker loop domain may close the vestibule, which may prevent substrates from entering the carrier domain.</text>
</comment>
<comment type="similarity">
    <text evidence="11">Belongs to the mitochondrial carrier (TC 2.A.29) family.</text>
</comment>
<organism evidence="13">
    <name type="scientific">Drosophila melanogaster</name>
    <name type="common">Fruit fly</name>
    <dbReference type="NCBI Taxonomy" id="7227"/>
    <lineage>
        <taxon>Eukaryota</taxon>
        <taxon>Metazoa</taxon>
        <taxon>Ecdysozoa</taxon>
        <taxon>Arthropoda</taxon>
        <taxon>Hexapoda</taxon>
        <taxon>Insecta</taxon>
        <taxon>Pterygota</taxon>
        <taxon>Neoptera</taxon>
        <taxon>Endopterygota</taxon>
        <taxon>Diptera</taxon>
        <taxon>Brachycera</taxon>
        <taxon>Muscomorpha</taxon>
        <taxon>Ephydroidea</taxon>
        <taxon>Drosophilidae</taxon>
        <taxon>Drosophila</taxon>
        <taxon>Sophophora</taxon>
    </lineage>
</organism>
<accession>Q9VA73</accession>
<accession>A0A0B4K6V1</accession>
<accession>A4V3N6</accession>
<accession>Q95TN5</accession>
<accession>Q9U5V8</accession>
<accession>Q9VA72</accession>
<accession>Q9VA74</accession>
<keyword id="KW-0877">Alternative promoter usage</keyword>
<keyword id="KW-0025">Alternative splicing</keyword>
<keyword id="KW-0106">Calcium</keyword>
<keyword id="KW-0472">Membrane</keyword>
<keyword id="KW-0479">Metal-binding</keyword>
<keyword id="KW-0496">Mitochondrion</keyword>
<keyword id="KW-0999">Mitochondrion inner membrane</keyword>
<keyword id="KW-1185">Reference proteome</keyword>
<keyword id="KW-0677">Repeat</keyword>
<keyword id="KW-0812">Transmembrane</keyword>
<keyword id="KW-1133">Transmembrane helix</keyword>
<keyword id="KW-0813">Transport</keyword>